<evidence type="ECO:0000255" key="1">
    <source>
        <dbReference type="HAMAP-Rule" id="MF_00394"/>
    </source>
</evidence>
<organism>
    <name type="scientific">Burkholderia vietnamiensis (strain G4 / LMG 22486)</name>
    <name type="common">Burkholderia cepacia (strain R1808)</name>
    <dbReference type="NCBI Taxonomy" id="269482"/>
    <lineage>
        <taxon>Bacteria</taxon>
        <taxon>Pseudomonadati</taxon>
        <taxon>Pseudomonadota</taxon>
        <taxon>Betaproteobacteria</taxon>
        <taxon>Burkholderiales</taxon>
        <taxon>Burkholderiaceae</taxon>
        <taxon>Burkholderia</taxon>
        <taxon>Burkholderia cepacia complex</taxon>
    </lineage>
</organism>
<sequence>MKVAVLGAGAWGTALAGHLAARHDTLLWARDAALIAGLQARHENSRYLEGIALPDALRYDADLDAALAHGAADDALCVIGAPVAGLRTLLRAMRDARCVPAHVVWVCKGFEADTHLLPHQVIAAELPEQRSNGVLSGPSFAREVGLGLPVALTVASASAACRERTLAAFHHGAMRIYTGDDVVGVEVGGAVKNVLAIATGIADGLGLGLNARAALITRGLAEMSRLGVALGGRAETFTGLTGLGDLILTATGDLSRNRTVGLQLASGRSLADILGALGHVAEGVRCAQAVLALAHAHAIEMPITEAVCGVLFDGVAPRDAVSGLLRRDARAE</sequence>
<accession>A4JI41</accession>
<gene>
    <name evidence="1" type="primary">gpsA</name>
    <name type="ordered locus">Bcep1808_2953</name>
</gene>
<keyword id="KW-0963">Cytoplasm</keyword>
<keyword id="KW-0444">Lipid biosynthesis</keyword>
<keyword id="KW-0443">Lipid metabolism</keyword>
<keyword id="KW-0520">NAD</keyword>
<keyword id="KW-0521">NADP</keyword>
<keyword id="KW-0547">Nucleotide-binding</keyword>
<keyword id="KW-0560">Oxidoreductase</keyword>
<keyword id="KW-0594">Phospholipid biosynthesis</keyword>
<keyword id="KW-1208">Phospholipid metabolism</keyword>
<protein>
    <recommendedName>
        <fullName evidence="1">Glycerol-3-phosphate dehydrogenase [NAD(P)+]</fullName>
        <ecNumber evidence="1">1.1.1.94</ecNumber>
    </recommendedName>
    <alternativeName>
        <fullName evidence="1">NAD(P)(+)-dependent glycerol-3-phosphate dehydrogenase</fullName>
    </alternativeName>
    <alternativeName>
        <fullName evidence="1">NAD(P)H-dependent dihydroxyacetone-phosphate reductase</fullName>
    </alternativeName>
</protein>
<name>GPDA_BURVG</name>
<dbReference type="EC" id="1.1.1.94" evidence="1"/>
<dbReference type="EMBL" id="CP000614">
    <property type="protein sequence ID" value="ABO55944.1"/>
    <property type="molecule type" value="Genomic_DNA"/>
</dbReference>
<dbReference type="SMR" id="A4JI41"/>
<dbReference type="KEGG" id="bvi:Bcep1808_2953"/>
<dbReference type="eggNOG" id="COG0240">
    <property type="taxonomic scope" value="Bacteria"/>
</dbReference>
<dbReference type="HOGENOM" id="CLU_033449_0_2_4"/>
<dbReference type="UniPathway" id="UPA00940"/>
<dbReference type="Proteomes" id="UP000002287">
    <property type="component" value="Chromosome 1"/>
</dbReference>
<dbReference type="GO" id="GO:0005829">
    <property type="term" value="C:cytosol"/>
    <property type="evidence" value="ECO:0007669"/>
    <property type="project" value="TreeGrafter"/>
</dbReference>
<dbReference type="GO" id="GO:0047952">
    <property type="term" value="F:glycerol-3-phosphate dehydrogenase [NAD(P)+] activity"/>
    <property type="evidence" value="ECO:0007669"/>
    <property type="project" value="UniProtKB-UniRule"/>
</dbReference>
<dbReference type="GO" id="GO:0051287">
    <property type="term" value="F:NAD binding"/>
    <property type="evidence" value="ECO:0007669"/>
    <property type="project" value="InterPro"/>
</dbReference>
<dbReference type="GO" id="GO:0005975">
    <property type="term" value="P:carbohydrate metabolic process"/>
    <property type="evidence" value="ECO:0007669"/>
    <property type="project" value="InterPro"/>
</dbReference>
<dbReference type="GO" id="GO:0046167">
    <property type="term" value="P:glycerol-3-phosphate biosynthetic process"/>
    <property type="evidence" value="ECO:0007669"/>
    <property type="project" value="UniProtKB-UniRule"/>
</dbReference>
<dbReference type="GO" id="GO:0046168">
    <property type="term" value="P:glycerol-3-phosphate catabolic process"/>
    <property type="evidence" value="ECO:0007669"/>
    <property type="project" value="InterPro"/>
</dbReference>
<dbReference type="GO" id="GO:0006650">
    <property type="term" value="P:glycerophospholipid metabolic process"/>
    <property type="evidence" value="ECO:0007669"/>
    <property type="project" value="UniProtKB-UniRule"/>
</dbReference>
<dbReference type="GO" id="GO:0008654">
    <property type="term" value="P:phospholipid biosynthetic process"/>
    <property type="evidence" value="ECO:0007669"/>
    <property type="project" value="UniProtKB-KW"/>
</dbReference>
<dbReference type="FunFam" id="1.10.1040.10:FF:000001">
    <property type="entry name" value="Glycerol-3-phosphate dehydrogenase [NAD(P)+]"/>
    <property type="match status" value="1"/>
</dbReference>
<dbReference type="FunFam" id="3.40.50.720:FF:000019">
    <property type="entry name" value="Glycerol-3-phosphate dehydrogenase [NAD(P)+]"/>
    <property type="match status" value="1"/>
</dbReference>
<dbReference type="Gene3D" id="1.10.1040.10">
    <property type="entry name" value="N-(1-d-carboxylethyl)-l-norvaline Dehydrogenase, domain 2"/>
    <property type="match status" value="1"/>
</dbReference>
<dbReference type="Gene3D" id="3.40.50.720">
    <property type="entry name" value="NAD(P)-binding Rossmann-like Domain"/>
    <property type="match status" value="1"/>
</dbReference>
<dbReference type="HAMAP" id="MF_00394">
    <property type="entry name" value="NAD_Glyc3P_dehydrog"/>
    <property type="match status" value="1"/>
</dbReference>
<dbReference type="InterPro" id="IPR008927">
    <property type="entry name" value="6-PGluconate_DH-like_C_sf"/>
</dbReference>
<dbReference type="InterPro" id="IPR013328">
    <property type="entry name" value="6PGD_dom2"/>
</dbReference>
<dbReference type="InterPro" id="IPR006168">
    <property type="entry name" value="G3P_DH_NAD-dep"/>
</dbReference>
<dbReference type="InterPro" id="IPR006109">
    <property type="entry name" value="G3P_DH_NAD-dep_C"/>
</dbReference>
<dbReference type="InterPro" id="IPR011128">
    <property type="entry name" value="G3P_DH_NAD-dep_N"/>
</dbReference>
<dbReference type="InterPro" id="IPR036291">
    <property type="entry name" value="NAD(P)-bd_dom_sf"/>
</dbReference>
<dbReference type="NCBIfam" id="NF000940">
    <property type="entry name" value="PRK00094.1-2"/>
    <property type="match status" value="1"/>
</dbReference>
<dbReference type="NCBIfam" id="NF000942">
    <property type="entry name" value="PRK00094.1-4"/>
    <property type="match status" value="1"/>
</dbReference>
<dbReference type="PANTHER" id="PTHR11728">
    <property type="entry name" value="GLYCEROL-3-PHOSPHATE DEHYDROGENASE"/>
    <property type="match status" value="1"/>
</dbReference>
<dbReference type="PANTHER" id="PTHR11728:SF1">
    <property type="entry name" value="GLYCEROL-3-PHOSPHATE DEHYDROGENASE [NAD(+)] 2, CHLOROPLASTIC"/>
    <property type="match status" value="1"/>
</dbReference>
<dbReference type="Pfam" id="PF07479">
    <property type="entry name" value="NAD_Gly3P_dh_C"/>
    <property type="match status" value="1"/>
</dbReference>
<dbReference type="Pfam" id="PF01210">
    <property type="entry name" value="NAD_Gly3P_dh_N"/>
    <property type="match status" value="1"/>
</dbReference>
<dbReference type="PIRSF" id="PIRSF000114">
    <property type="entry name" value="Glycerol-3-P_dh"/>
    <property type="match status" value="1"/>
</dbReference>
<dbReference type="PRINTS" id="PR00077">
    <property type="entry name" value="GPDHDRGNASE"/>
</dbReference>
<dbReference type="SUPFAM" id="SSF48179">
    <property type="entry name" value="6-phosphogluconate dehydrogenase C-terminal domain-like"/>
    <property type="match status" value="1"/>
</dbReference>
<dbReference type="SUPFAM" id="SSF51735">
    <property type="entry name" value="NAD(P)-binding Rossmann-fold domains"/>
    <property type="match status" value="1"/>
</dbReference>
<dbReference type="PROSITE" id="PS00957">
    <property type="entry name" value="NAD_G3PDH"/>
    <property type="match status" value="1"/>
</dbReference>
<feature type="chain" id="PRO_1000049492" description="Glycerol-3-phosphate dehydrogenase [NAD(P)+]">
    <location>
        <begin position="1"/>
        <end position="332"/>
    </location>
</feature>
<feature type="active site" description="Proton acceptor" evidence="1">
    <location>
        <position position="192"/>
    </location>
</feature>
<feature type="binding site" evidence="1">
    <location>
        <position position="11"/>
    </location>
    <ligand>
        <name>NADPH</name>
        <dbReference type="ChEBI" id="CHEBI:57783"/>
    </ligand>
</feature>
<feature type="binding site" evidence="1">
    <location>
        <position position="30"/>
    </location>
    <ligand>
        <name>NADPH</name>
        <dbReference type="ChEBI" id="CHEBI:57783"/>
    </ligand>
</feature>
<feature type="binding site" evidence="1">
    <location>
        <position position="108"/>
    </location>
    <ligand>
        <name>NADPH</name>
        <dbReference type="ChEBI" id="CHEBI:57783"/>
    </ligand>
</feature>
<feature type="binding site" evidence="1">
    <location>
        <position position="108"/>
    </location>
    <ligand>
        <name>sn-glycerol 3-phosphate</name>
        <dbReference type="ChEBI" id="CHEBI:57597"/>
    </ligand>
</feature>
<feature type="binding site" evidence="1">
    <location>
        <position position="137"/>
    </location>
    <ligand>
        <name>sn-glycerol 3-phosphate</name>
        <dbReference type="ChEBI" id="CHEBI:57597"/>
    </ligand>
</feature>
<feature type="binding site" evidence="1">
    <location>
        <position position="139"/>
    </location>
    <ligand>
        <name>sn-glycerol 3-phosphate</name>
        <dbReference type="ChEBI" id="CHEBI:57597"/>
    </ligand>
</feature>
<feature type="binding site" evidence="1">
    <location>
        <position position="141"/>
    </location>
    <ligand>
        <name>NADPH</name>
        <dbReference type="ChEBI" id="CHEBI:57783"/>
    </ligand>
</feature>
<feature type="binding site" evidence="1">
    <location>
        <position position="192"/>
    </location>
    <ligand>
        <name>sn-glycerol 3-phosphate</name>
        <dbReference type="ChEBI" id="CHEBI:57597"/>
    </ligand>
</feature>
<feature type="binding site" evidence="1">
    <location>
        <position position="245"/>
    </location>
    <ligand>
        <name>sn-glycerol 3-phosphate</name>
        <dbReference type="ChEBI" id="CHEBI:57597"/>
    </ligand>
</feature>
<feature type="binding site" evidence="1">
    <location>
        <position position="255"/>
    </location>
    <ligand>
        <name>sn-glycerol 3-phosphate</name>
        <dbReference type="ChEBI" id="CHEBI:57597"/>
    </ligand>
</feature>
<feature type="binding site" evidence="1">
    <location>
        <position position="256"/>
    </location>
    <ligand>
        <name>NADPH</name>
        <dbReference type="ChEBI" id="CHEBI:57783"/>
    </ligand>
</feature>
<feature type="binding site" evidence="1">
    <location>
        <position position="256"/>
    </location>
    <ligand>
        <name>sn-glycerol 3-phosphate</name>
        <dbReference type="ChEBI" id="CHEBI:57597"/>
    </ligand>
</feature>
<feature type="binding site" evidence="1">
    <location>
        <position position="257"/>
    </location>
    <ligand>
        <name>sn-glycerol 3-phosphate</name>
        <dbReference type="ChEBI" id="CHEBI:57597"/>
    </ligand>
</feature>
<feature type="binding site" evidence="1">
    <location>
        <position position="280"/>
    </location>
    <ligand>
        <name>NADPH</name>
        <dbReference type="ChEBI" id="CHEBI:57783"/>
    </ligand>
</feature>
<feature type="binding site" evidence="1">
    <location>
        <position position="282"/>
    </location>
    <ligand>
        <name>NADPH</name>
        <dbReference type="ChEBI" id="CHEBI:57783"/>
    </ligand>
</feature>
<comment type="function">
    <text evidence="1">Catalyzes the reduction of the glycolytic intermediate dihydroxyacetone phosphate (DHAP) to sn-glycerol 3-phosphate (G3P), the key precursor for phospholipid synthesis.</text>
</comment>
<comment type="catalytic activity">
    <reaction evidence="1">
        <text>sn-glycerol 3-phosphate + NAD(+) = dihydroxyacetone phosphate + NADH + H(+)</text>
        <dbReference type="Rhea" id="RHEA:11092"/>
        <dbReference type="ChEBI" id="CHEBI:15378"/>
        <dbReference type="ChEBI" id="CHEBI:57540"/>
        <dbReference type="ChEBI" id="CHEBI:57597"/>
        <dbReference type="ChEBI" id="CHEBI:57642"/>
        <dbReference type="ChEBI" id="CHEBI:57945"/>
        <dbReference type="EC" id="1.1.1.94"/>
    </reaction>
    <physiologicalReaction direction="right-to-left" evidence="1">
        <dbReference type="Rhea" id="RHEA:11094"/>
    </physiologicalReaction>
</comment>
<comment type="catalytic activity">
    <reaction evidence="1">
        <text>sn-glycerol 3-phosphate + NADP(+) = dihydroxyacetone phosphate + NADPH + H(+)</text>
        <dbReference type="Rhea" id="RHEA:11096"/>
        <dbReference type="ChEBI" id="CHEBI:15378"/>
        <dbReference type="ChEBI" id="CHEBI:57597"/>
        <dbReference type="ChEBI" id="CHEBI:57642"/>
        <dbReference type="ChEBI" id="CHEBI:57783"/>
        <dbReference type="ChEBI" id="CHEBI:58349"/>
        <dbReference type="EC" id="1.1.1.94"/>
    </reaction>
    <physiologicalReaction direction="right-to-left" evidence="1">
        <dbReference type="Rhea" id="RHEA:11098"/>
    </physiologicalReaction>
</comment>
<comment type="pathway">
    <text evidence="1">Membrane lipid metabolism; glycerophospholipid metabolism.</text>
</comment>
<comment type="subcellular location">
    <subcellularLocation>
        <location evidence="1">Cytoplasm</location>
    </subcellularLocation>
</comment>
<comment type="similarity">
    <text evidence="1">Belongs to the NAD-dependent glycerol-3-phosphate dehydrogenase family.</text>
</comment>
<proteinExistence type="inferred from homology"/>
<reference key="1">
    <citation type="submission" date="2007-03" db="EMBL/GenBank/DDBJ databases">
        <title>Complete sequence of chromosome 1 of Burkholderia vietnamiensis G4.</title>
        <authorList>
            <consortium name="US DOE Joint Genome Institute"/>
            <person name="Copeland A."/>
            <person name="Lucas S."/>
            <person name="Lapidus A."/>
            <person name="Barry K."/>
            <person name="Detter J.C."/>
            <person name="Glavina del Rio T."/>
            <person name="Hammon N."/>
            <person name="Israni S."/>
            <person name="Dalin E."/>
            <person name="Tice H."/>
            <person name="Pitluck S."/>
            <person name="Chain P."/>
            <person name="Malfatti S."/>
            <person name="Shin M."/>
            <person name="Vergez L."/>
            <person name="Schmutz J."/>
            <person name="Larimer F."/>
            <person name="Land M."/>
            <person name="Hauser L."/>
            <person name="Kyrpides N."/>
            <person name="Tiedje J."/>
            <person name="Richardson P."/>
        </authorList>
    </citation>
    <scope>NUCLEOTIDE SEQUENCE [LARGE SCALE GENOMIC DNA]</scope>
    <source>
        <strain>G4 / LMG 22486</strain>
    </source>
</reference>